<dbReference type="EMBL" id="U00090">
    <property type="protein sequence ID" value="AAB92423.1"/>
    <property type="molecule type" value="Genomic_DNA"/>
</dbReference>
<dbReference type="RefSeq" id="NP_443800.1">
    <property type="nucleotide sequence ID" value="NC_000914.2"/>
</dbReference>
<dbReference type="SMR" id="P55390"/>
<dbReference type="KEGG" id="rhi:NGR_a00060"/>
<dbReference type="PATRIC" id="fig|394.7.peg.4"/>
<dbReference type="eggNOG" id="COG1278">
    <property type="taxonomic scope" value="Bacteria"/>
</dbReference>
<dbReference type="HOGENOM" id="CLU_117621_4_1_5"/>
<dbReference type="OrthoDB" id="9801074at2"/>
<dbReference type="Proteomes" id="UP000001054">
    <property type="component" value="Plasmid pNGR234a"/>
</dbReference>
<dbReference type="GO" id="GO:0005829">
    <property type="term" value="C:cytosol"/>
    <property type="evidence" value="ECO:0007669"/>
    <property type="project" value="UniProtKB-ARBA"/>
</dbReference>
<dbReference type="GO" id="GO:0003677">
    <property type="term" value="F:DNA binding"/>
    <property type="evidence" value="ECO:0007669"/>
    <property type="project" value="UniProtKB-KW"/>
</dbReference>
<dbReference type="CDD" id="cd04458">
    <property type="entry name" value="CSP_CDS"/>
    <property type="match status" value="1"/>
</dbReference>
<dbReference type="FunFam" id="2.40.50.140:FF:000006">
    <property type="entry name" value="Cold shock protein CspC"/>
    <property type="match status" value="1"/>
</dbReference>
<dbReference type="Gene3D" id="2.40.50.140">
    <property type="entry name" value="Nucleic acid-binding proteins"/>
    <property type="match status" value="1"/>
</dbReference>
<dbReference type="InterPro" id="IPR012156">
    <property type="entry name" value="Cold_shock_CspA"/>
</dbReference>
<dbReference type="InterPro" id="IPR050181">
    <property type="entry name" value="Cold_shock_domain"/>
</dbReference>
<dbReference type="InterPro" id="IPR011129">
    <property type="entry name" value="CSD"/>
</dbReference>
<dbReference type="InterPro" id="IPR019844">
    <property type="entry name" value="CSD_CS"/>
</dbReference>
<dbReference type="InterPro" id="IPR002059">
    <property type="entry name" value="CSP_DNA-bd"/>
</dbReference>
<dbReference type="InterPro" id="IPR012340">
    <property type="entry name" value="NA-bd_OB-fold"/>
</dbReference>
<dbReference type="PANTHER" id="PTHR11544">
    <property type="entry name" value="COLD SHOCK DOMAIN CONTAINING PROTEINS"/>
    <property type="match status" value="1"/>
</dbReference>
<dbReference type="Pfam" id="PF00313">
    <property type="entry name" value="CSD"/>
    <property type="match status" value="1"/>
</dbReference>
<dbReference type="PIRSF" id="PIRSF002599">
    <property type="entry name" value="Cold_shock_A"/>
    <property type="match status" value="1"/>
</dbReference>
<dbReference type="PRINTS" id="PR00050">
    <property type="entry name" value="COLDSHOCK"/>
</dbReference>
<dbReference type="SMART" id="SM00357">
    <property type="entry name" value="CSP"/>
    <property type="match status" value="1"/>
</dbReference>
<dbReference type="SUPFAM" id="SSF50249">
    <property type="entry name" value="Nucleic acid-binding proteins"/>
    <property type="match status" value="1"/>
</dbReference>
<dbReference type="PROSITE" id="PS00352">
    <property type="entry name" value="CSD_1"/>
    <property type="match status" value="1"/>
</dbReference>
<dbReference type="PROSITE" id="PS51857">
    <property type="entry name" value="CSD_2"/>
    <property type="match status" value="1"/>
</dbReference>
<keyword id="KW-0010">Activator</keyword>
<keyword id="KW-0963">Cytoplasm</keyword>
<keyword id="KW-0238">DNA-binding</keyword>
<keyword id="KW-0614">Plasmid</keyword>
<keyword id="KW-1185">Reference proteome</keyword>
<keyword id="KW-0804">Transcription</keyword>
<keyword id="KW-0805">Transcription regulation</keyword>
<evidence type="ECO:0000305" key="1"/>
<accession>P55390</accession>
<name>Y4CH_SINFN</name>
<organism>
    <name type="scientific">Sinorhizobium fredii (strain NBRC 101917 / NGR234)</name>
    <dbReference type="NCBI Taxonomy" id="394"/>
    <lineage>
        <taxon>Bacteria</taxon>
        <taxon>Pseudomonadati</taxon>
        <taxon>Pseudomonadota</taxon>
        <taxon>Alphaproteobacteria</taxon>
        <taxon>Hyphomicrobiales</taxon>
        <taxon>Rhizobiaceae</taxon>
        <taxon>Sinorhizobium/Ensifer group</taxon>
        <taxon>Sinorhizobium</taxon>
    </lineage>
</organism>
<geneLocation type="plasmid">
    <name>sym pNGR234a</name>
</geneLocation>
<sequence>MMATGTVKWFNATKGFGFIQPDDGSADVFVHISAVERAGLRELKDGQKISYELVKDRKSGKMSADNLQA</sequence>
<comment type="subcellular location">
    <subcellularLocation>
        <location evidence="1">Cytoplasm</location>
    </subcellularLocation>
</comment>
<gene>
    <name type="ordered locus">NGR_a00060</name>
    <name type="ORF">y4cH</name>
</gene>
<protein>
    <recommendedName>
        <fullName>Probable cold shock protein y4cH</fullName>
    </recommendedName>
</protein>
<proteinExistence type="predicted"/>
<reference key="1">
    <citation type="journal article" date="1997" name="Nature">
        <title>Molecular basis of symbiosis between Rhizobium and legumes.</title>
        <authorList>
            <person name="Freiberg C.A."/>
            <person name="Fellay R."/>
            <person name="Bairoch A."/>
            <person name="Broughton W.J."/>
            <person name="Rosenthal A."/>
            <person name="Perret X."/>
        </authorList>
    </citation>
    <scope>NUCLEOTIDE SEQUENCE [LARGE SCALE GENOMIC DNA]</scope>
    <source>
        <strain>NBRC 101917 / NGR234</strain>
    </source>
</reference>
<reference key="2">
    <citation type="journal article" date="2009" name="Appl. Environ. Microbiol.">
        <title>Rhizobium sp. strain NGR234 possesses a remarkable number of secretion systems.</title>
        <authorList>
            <person name="Schmeisser C."/>
            <person name="Liesegang H."/>
            <person name="Krysciak D."/>
            <person name="Bakkou N."/>
            <person name="Le Quere A."/>
            <person name="Wollherr A."/>
            <person name="Heinemeyer I."/>
            <person name="Morgenstern B."/>
            <person name="Pommerening-Roeser A."/>
            <person name="Flores M."/>
            <person name="Palacios R."/>
            <person name="Brenner S."/>
            <person name="Gottschalk G."/>
            <person name="Schmitz R.A."/>
            <person name="Broughton W.J."/>
            <person name="Perret X."/>
            <person name="Strittmatter A.W."/>
            <person name="Streit W.R."/>
        </authorList>
    </citation>
    <scope>NUCLEOTIDE SEQUENCE [LARGE SCALE GENOMIC DNA]</scope>
    <source>
        <strain>NBRC 101917 / NGR234</strain>
    </source>
</reference>
<feature type="chain" id="PRO_0000100346" description="Probable cold shock protein y4cH">
    <location>
        <begin position="1"/>
        <end position="69"/>
    </location>
</feature>
<feature type="domain" description="CSD">
    <location>
        <begin position="5"/>
        <end position="65"/>
    </location>
</feature>